<gene>
    <name evidence="1" type="primary">rplT</name>
    <name type="ordered locus">RC0935</name>
</gene>
<protein>
    <recommendedName>
        <fullName evidence="1">Large ribosomal subunit protein bL20</fullName>
    </recommendedName>
    <alternativeName>
        <fullName evidence="2">50S ribosomal protein L20</fullName>
    </alternativeName>
</protein>
<sequence length="117" mass="13516">MTRAKSGKISKNRHKKILKLAKGYRGRANSCFRVAIEKVEKALQYAYRDRRNRKRDFRGLWIQRINAAVREHGLVYSQFMGALKKTEIDIDRKVLAELAVNNSDGFVSIVEKAKAHI</sequence>
<evidence type="ECO:0000255" key="1">
    <source>
        <dbReference type="HAMAP-Rule" id="MF_00382"/>
    </source>
</evidence>
<evidence type="ECO:0000305" key="2"/>
<name>RL20_RICCN</name>
<keyword id="KW-0687">Ribonucleoprotein</keyword>
<keyword id="KW-0689">Ribosomal protein</keyword>
<keyword id="KW-0694">RNA-binding</keyword>
<keyword id="KW-0699">rRNA-binding</keyword>
<accession>Q92H37</accession>
<dbReference type="EMBL" id="AE006914">
    <property type="protein sequence ID" value="AAL03473.1"/>
    <property type="molecule type" value="Genomic_DNA"/>
</dbReference>
<dbReference type="PIR" id="G97816">
    <property type="entry name" value="G97816"/>
</dbReference>
<dbReference type="RefSeq" id="WP_004997919.1">
    <property type="nucleotide sequence ID" value="NC_003103.1"/>
</dbReference>
<dbReference type="SMR" id="Q92H37"/>
<dbReference type="GeneID" id="95361428"/>
<dbReference type="KEGG" id="rco:RC0935"/>
<dbReference type="HOGENOM" id="CLU_123265_0_1_5"/>
<dbReference type="Proteomes" id="UP000000816">
    <property type="component" value="Chromosome"/>
</dbReference>
<dbReference type="GO" id="GO:1990904">
    <property type="term" value="C:ribonucleoprotein complex"/>
    <property type="evidence" value="ECO:0007669"/>
    <property type="project" value="UniProtKB-KW"/>
</dbReference>
<dbReference type="GO" id="GO:0005840">
    <property type="term" value="C:ribosome"/>
    <property type="evidence" value="ECO:0007669"/>
    <property type="project" value="UniProtKB-KW"/>
</dbReference>
<dbReference type="GO" id="GO:0019843">
    <property type="term" value="F:rRNA binding"/>
    <property type="evidence" value="ECO:0007669"/>
    <property type="project" value="UniProtKB-UniRule"/>
</dbReference>
<dbReference type="GO" id="GO:0003735">
    <property type="term" value="F:structural constituent of ribosome"/>
    <property type="evidence" value="ECO:0007669"/>
    <property type="project" value="InterPro"/>
</dbReference>
<dbReference type="GO" id="GO:0000027">
    <property type="term" value="P:ribosomal large subunit assembly"/>
    <property type="evidence" value="ECO:0007669"/>
    <property type="project" value="UniProtKB-UniRule"/>
</dbReference>
<dbReference type="GO" id="GO:0006412">
    <property type="term" value="P:translation"/>
    <property type="evidence" value="ECO:0007669"/>
    <property type="project" value="InterPro"/>
</dbReference>
<dbReference type="CDD" id="cd07026">
    <property type="entry name" value="Ribosomal_L20"/>
    <property type="match status" value="1"/>
</dbReference>
<dbReference type="FunFam" id="1.10.1900.20:FF:000001">
    <property type="entry name" value="50S ribosomal protein L20"/>
    <property type="match status" value="1"/>
</dbReference>
<dbReference type="Gene3D" id="6.10.160.10">
    <property type="match status" value="1"/>
</dbReference>
<dbReference type="Gene3D" id="1.10.1900.20">
    <property type="entry name" value="Ribosomal protein L20"/>
    <property type="match status" value="1"/>
</dbReference>
<dbReference type="HAMAP" id="MF_00382">
    <property type="entry name" value="Ribosomal_bL20"/>
    <property type="match status" value="1"/>
</dbReference>
<dbReference type="InterPro" id="IPR005813">
    <property type="entry name" value="Ribosomal_bL20"/>
</dbReference>
<dbReference type="InterPro" id="IPR049946">
    <property type="entry name" value="RIBOSOMAL_L20_CS"/>
</dbReference>
<dbReference type="InterPro" id="IPR035566">
    <property type="entry name" value="Ribosomal_protein_bL20_C"/>
</dbReference>
<dbReference type="NCBIfam" id="TIGR01032">
    <property type="entry name" value="rplT_bact"/>
    <property type="match status" value="1"/>
</dbReference>
<dbReference type="PANTHER" id="PTHR10986">
    <property type="entry name" value="39S RIBOSOMAL PROTEIN L20"/>
    <property type="match status" value="1"/>
</dbReference>
<dbReference type="Pfam" id="PF00453">
    <property type="entry name" value="Ribosomal_L20"/>
    <property type="match status" value="1"/>
</dbReference>
<dbReference type="PRINTS" id="PR00062">
    <property type="entry name" value="RIBOSOMALL20"/>
</dbReference>
<dbReference type="SUPFAM" id="SSF74731">
    <property type="entry name" value="Ribosomal protein L20"/>
    <property type="match status" value="1"/>
</dbReference>
<dbReference type="PROSITE" id="PS00937">
    <property type="entry name" value="RIBOSOMAL_L20"/>
    <property type="match status" value="1"/>
</dbReference>
<proteinExistence type="inferred from homology"/>
<organism>
    <name type="scientific">Rickettsia conorii (strain ATCC VR-613 / Malish 7)</name>
    <dbReference type="NCBI Taxonomy" id="272944"/>
    <lineage>
        <taxon>Bacteria</taxon>
        <taxon>Pseudomonadati</taxon>
        <taxon>Pseudomonadota</taxon>
        <taxon>Alphaproteobacteria</taxon>
        <taxon>Rickettsiales</taxon>
        <taxon>Rickettsiaceae</taxon>
        <taxon>Rickettsieae</taxon>
        <taxon>Rickettsia</taxon>
        <taxon>spotted fever group</taxon>
    </lineage>
</organism>
<feature type="chain" id="PRO_0000177216" description="Large ribosomal subunit protein bL20">
    <location>
        <begin position="1"/>
        <end position="117"/>
    </location>
</feature>
<comment type="function">
    <text evidence="1">Binds directly to 23S ribosomal RNA and is necessary for the in vitro assembly process of the 50S ribosomal subunit. It is not involved in the protein synthesizing functions of that subunit.</text>
</comment>
<comment type="similarity">
    <text evidence="1">Belongs to the bacterial ribosomal protein bL20 family.</text>
</comment>
<reference key="1">
    <citation type="journal article" date="2001" name="Science">
        <title>Mechanisms of evolution in Rickettsia conorii and R. prowazekii.</title>
        <authorList>
            <person name="Ogata H."/>
            <person name="Audic S."/>
            <person name="Renesto-Audiffren P."/>
            <person name="Fournier P.-E."/>
            <person name="Barbe V."/>
            <person name="Samson D."/>
            <person name="Roux V."/>
            <person name="Cossart P."/>
            <person name="Weissenbach J."/>
            <person name="Claverie J.-M."/>
            <person name="Raoult D."/>
        </authorList>
    </citation>
    <scope>NUCLEOTIDE SEQUENCE [LARGE SCALE GENOMIC DNA]</scope>
    <source>
        <strain>ATCC VR-613 / Malish 7</strain>
    </source>
</reference>